<keyword id="KW-0963">Cytoplasm</keyword>
<keyword id="KW-0441">Lipid A biosynthesis</keyword>
<keyword id="KW-0444">Lipid biosynthesis</keyword>
<keyword id="KW-0443">Lipid metabolism</keyword>
<keyword id="KW-0456">Lyase</keyword>
<keyword id="KW-1185">Reference proteome</keyword>
<reference key="1">
    <citation type="journal article" date="2001" name="Science">
        <title>Comparative genomics of Listeria species.</title>
        <authorList>
            <person name="Glaser P."/>
            <person name="Frangeul L."/>
            <person name="Buchrieser C."/>
            <person name="Rusniok C."/>
            <person name="Amend A."/>
            <person name="Baquero F."/>
            <person name="Berche P."/>
            <person name="Bloecker H."/>
            <person name="Brandt P."/>
            <person name="Chakraborty T."/>
            <person name="Charbit A."/>
            <person name="Chetouani F."/>
            <person name="Couve E."/>
            <person name="de Daruvar A."/>
            <person name="Dehoux P."/>
            <person name="Domann E."/>
            <person name="Dominguez-Bernal G."/>
            <person name="Duchaud E."/>
            <person name="Durant L."/>
            <person name="Dussurget O."/>
            <person name="Entian K.-D."/>
            <person name="Fsihi H."/>
            <person name="Garcia-del Portillo F."/>
            <person name="Garrido P."/>
            <person name="Gautier L."/>
            <person name="Goebel W."/>
            <person name="Gomez-Lopez N."/>
            <person name="Hain T."/>
            <person name="Hauf J."/>
            <person name="Jackson D."/>
            <person name="Jones L.-M."/>
            <person name="Kaerst U."/>
            <person name="Kreft J."/>
            <person name="Kuhn M."/>
            <person name="Kunst F."/>
            <person name="Kurapkat G."/>
            <person name="Madueno E."/>
            <person name="Maitournam A."/>
            <person name="Mata Vicente J."/>
            <person name="Ng E."/>
            <person name="Nedjari H."/>
            <person name="Nordsiek G."/>
            <person name="Novella S."/>
            <person name="de Pablos B."/>
            <person name="Perez-Diaz J.-C."/>
            <person name="Purcell R."/>
            <person name="Remmel B."/>
            <person name="Rose M."/>
            <person name="Schlueter T."/>
            <person name="Simoes N."/>
            <person name="Tierrez A."/>
            <person name="Vazquez-Boland J.-A."/>
            <person name="Voss H."/>
            <person name="Wehland J."/>
            <person name="Cossart P."/>
        </authorList>
    </citation>
    <scope>NUCLEOTIDE SEQUENCE [LARGE SCALE GENOMIC DNA]</scope>
    <source>
        <strain>ATCC BAA-679 / EGD-e</strain>
    </source>
</reference>
<organism>
    <name type="scientific">Listeria monocytogenes serovar 1/2a (strain ATCC BAA-679 / EGD-e)</name>
    <dbReference type="NCBI Taxonomy" id="169963"/>
    <lineage>
        <taxon>Bacteria</taxon>
        <taxon>Bacillati</taxon>
        <taxon>Bacillota</taxon>
        <taxon>Bacilli</taxon>
        <taxon>Bacillales</taxon>
        <taxon>Listeriaceae</taxon>
        <taxon>Listeria</taxon>
    </lineage>
</organism>
<feature type="chain" id="PRO_0000091699" description="3-hydroxyacyl-[acyl-carrier-protein] dehydratase FabZ">
    <location>
        <begin position="1"/>
        <end position="144"/>
    </location>
</feature>
<feature type="active site" evidence="1">
    <location>
        <position position="48"/>
    </location>
</feature>
<sequence length="144" mass="15858">MLDIKKIKEILPHRYPFLLVDRVISVEEGKKVTAIKNVTANEEFFNGHFPEYPVMPGVLIVEALAQTSGIAMMQSEANKGKIGLFAGIDGCRFKRQVVPGDQLLLEAEITRMRGAIAKAKVKATVEGDLVCEAEIMFALSDLPK</sequence>
<protein>
    <recommendedName>
        <fullName evidence="1">3-hydroxyacyl-[acyl-carrier-protein] dehydratase FabZ</fullName>
        <ecNumber evidence="1">4.2.1.59</ecNumber>
    </recommendedName>
    <alternativeName>
        <fullName evidence="1">(3R)-hydroxymyristoyl-[acyl-carrier-protein] dehydratase</fullName>
        <shortName evidence="1">(3R)-hydroxymyristoyl-ACP dehydrase</shortName>
    </alternativeName>
    <alternativeName>
        <fullName evidence="1">Beta-hydroxyacyl-ACP dehydratase</fullName>
    </alternativeName>
</protein>
<proteinExistence type="inferred from homology"/>
<dbReference type="EC" id="4.2.1.59" evidence="1"/>
<dbReference type="EMBL" id="AL591983">
    <property type="protein sequence ID" value="CAD00602.1"/>
    <property type="molecule type" value="Genomic_DNA"/>
</dbReference>
<dbReference type="PIR" id="AD1390">
    <property type="entry name" value="AD1390"/>
</dbReference>
<dbReference type="RefSeq" id="NP_466047.1">
    <property type="nucleotide sequence ID" value="NC_003210.1"/>
</dbReference>
<dbReference type="RefSeq" id="WP_003723457.1">
    <property type="nucleotide sequence ID" value="NZ_CP149495.1"/>
</dbReference>
<dbReference type="SMR" id="Q8Y4C6"/>
<dbReference type="STRING" id="169963.gene:17595235"/>
<dbReference type="PaxDb" id="169963-lmo2524"/>
<dbReference type="EnsemblBacteria" id="CAD00602">
    <property type="protein sequence ID" value="CAD00602"/>
    <property type="gene ID" value="CAD00602"/>
</dbReference>
<dbReference type="GeneID" id="93240392"/>
<dbReference type="GeneID" id="987293"/>
<dbReference type="KEGG" id="lmo:lmo2524"/>
<dbReference type="PATRIC" id="fig|169963.11.peg.2585"/>
<dbReference type="eggNOG" id="COG0764">
    <property type="taxonomic scope" value="Bacteria"/>
</dbReference>
<dbReference type="HOGENOM" id="CLU_078912_3_0_9"/>
<dbReference type="OrthoDB" id="9772788at2"/>
<dbReference type="PhylomeDB" id="Q8Y4C6"/>
<dbReference type="BioCyc" id="LMON169963:LMO2524-MONOMER"/>
<dbReference type="Proteomes" id="UP000000817">
    <property type="component" value="Chromosome"/>
</dbReference>
<dbReference type="GO" id="GO:0005737">
    <property type="term" value="C:cytoplasm"/>
    <property type="evidence" value="ECO:0007669"/>
    <property type="project" value="UniProtKB-SubCell"/>
</dbReference>
<dbReference type="GO" id="GO:0016020">
    <property type="term" value="C:membrane"/>
    <property type="evidence" value="ECO:0007669"/>
    <property type="project" value="GOC"/>
</dbReference>
<dbReference type="GO" id="GO:0019171">
    <property type="term" value="F:(3R)-hydroxyacyl-[acyl-carrier-protein] dehydratase activity"/>
    <property type="evidence" value="ECO:0007669"/>
    <property type="project" value="UniProtKB-EC"/>
</dbReference>
<dbReference type="GO" id="GO:0006633">
    <property type="term" value="P:fatty acid biosynthetic process"/>
    <property type="evidence" value="ECO:0007669"/>
    <property type="project" value="UniProtKB-UniRule"/>
</dbReference>
<dbReference type="GO" id="GO:0009245">
    <property type="term" value="P:lipid A biosynthetic process"/>
    <property type="evidence" value="ECO:0007669"/>
    <property type="project" value="UniProtKB-UniRule"/>
</dbReference>
<dbReference type="CDD" id="cd01288">
    <property type="entry name" value="FabZ"/>
    <property type="match status" value="1"/>
</dbReference>
<dbReference type="FunFam" id="3.10.129.10:FF:000001">
    <property type="entry name" value="3-hydroxyacyl-[acyl-carrier-protein] dehydratase FabZ"/>
    <property type="match status" value="1"/>
</dbReference>
<dbReference type="Gene3D" id="3.10.129.10">
    <property type="entry name" value="Hotdog Thioesterase"/>
    <property type="match status" value="1"/>
</dbReference>
<dbReference type="HAMAP" id="MF_00406">
    <property type="entry name" value="FabZ"/>
    <property type="match status" value="1"/>
</dbReference>
<dbReference type="InterPro" id="IPR013114">
    <property type="entry name" value="FabA_FabZ"/>
</dbReference>
<dbReference type="InterPro" id="IPR010084">
    <property type="entry name" value="FabZ"/>
</dbReference>
<dbReference type="InterPro" id="IPR029069">
    <property type="entry name" value="HotDog_dom_sf"/>
</dbReference>
<dbReference type="NCBIfam" id="TIGR01750">
    <property type="entry name" value="fabZ"/>
    <property type="match status" value="1"/>
</dbReference>
<dbReference type="NCBIfam" id="NF000582">
    <property type="entry name" value="PRK00006.1"/>
    <property type="match status" value="1"/>
</dbReference>
<dbReference type="PANTHER" id="PTHR30272">
    <property type="entry name" value="3-HYDROXYACYL-[ACYL-CARRIER-PROTEIN] DEHYDRATASE"/>
    <property type="match status" value="1"/>
</dbReference>
<dbReference type="PANTHER" id="PTHR30272:SF1">
    <property type="entry name" value="3-HYDROXYACYL-[ACYL-CARRIER-PROTEIN] DEHYDRATASE"/>
    <property type="match status" value="1"/>
</dbReference>
<dbReference type="Pfam" id="PF07977">
    <property type="entry name" value="FabA"/>
    <property type="match status" value="1"/>
</dbReference>
<dbReference type="SUPFAM" id="SSF54637">
    <property type="entry name" value="Thioesterase/thiol ester dehydrase-isomerase"/>
    <property type="match status" value="1"/>
</dbReference>
<name>FABZ_LISMO</name>
<gene>
    <name evidence="1" type="primary">fabZ</name>
    <name type="ordered locus">lmo2524</name>
</gene>
<evidence type="ECO:0000255" key="1">
    <source>
        <dbReference type="HAMAP-Rule" id="MF_00406"/>
    </source>
</evidence>
<comment type="function">
    <text evidence="1">Involved in unsaturated fatty acids biosynthesis. Catalyzes the dehydration of short chain beta-hydroxyacyl-ACPs and long chain saturated and unsaturated beta-hydroxyacyl-ACPs.</text>
</comment>
<comment type="catalytic activity">
    <reaction evidence="1">
        <text>a (3R)-hydroxyacyl-[ACP] = a (2E)-enoyl-[ACP] + H2O</text>
        <dbReference type="Rhea" id="RHEA:13097"/>
        <dbReference type="Rhea" id="RHEA-COMP:9925"/>
        <dbReference type="Rhea" id="RHEA-COMP:9945"/>
        <dbReference type="ChEBI" id="CHEBI:15377"/>
        <dbReference type="ChEBI" id="CHEBI:78784"/>
        <dbReference type="ChEBI" id="CHEBI:78827"/>
        <dbReference type="EC" id="4.2.1.59"/>
    </reaction>
</comment>
<comment type="subcellular location">
    <subcellularLocation>
        <location evidence="1">Cytoplasm</location>
    </subcellularLocation>
</comment>
<comment type="similarity">
    <text evidence="1">Belongs to the thioester dehydratase family. FabZ subfamily.</text>
</comment>
<accession>Q8Y4C6</accession>